<accession>Q9JI15</accession>
<name>CK2N1_RAT</name>
<reference key="1">
    <citation type="journal article" date="2001" name="Neuroscience">
        <title>Calcium/calmodulin-dependent protein kinase II inhibitor protein: localization of isoforms in rat brain.</title>
        <authorList>
            <person name="Chang B.H."/>
            <person name="Mukherji S."/>
            <person name="Soderling T.R."/>
        </authorList>
    </citation>
    <scope>NUCLEOTIDE SEQUENCE [MRNA]</scope>
    <scope>FUNCTION</scope>
    <scope>INTERACTION WITH CAMK2A AND CAMK2B</scope>
    <scope>SUBCELLULAR LOCATION</scope>
    <scope>TISSUE SPECIFICITY</scope>
    <scope>MUTAGENESIS OF ARG-43; ILE-58 AND 59-LYS--ALA-61</scope>
</reference>
<reference key="2">
    <citation type="journal article" date="2019" name="Hypertension">
        <title>Camk2n1 Is a Negative Regulator of Blood Pressure, Left Ventricular Mass, Insulin Sensitivity, and Promotes Adiposity.</title>
        <authorList>
            <person name="Alfazema N."/>
            <person name="Barrier M."/>
            <person name="de Proce S.M."/>
            <person name="Menzies R.I."/>
            <person name="Carter R."/>
            <person name="Stewart K."/>
            <person name="Diaz A.G."/>
            <person name="Moyon B."/>
            <person name="Webster Z."/>
            <person name="Bellamy C.O.C."/>
            <person name="Arends M.J."/>
            <person name="Stimson R.H."/>
            <person name="Morton N.M."/>
            <person name="Aitman T.J."/>
            <person name="Coan P.M."/>
        </authorList>
    </citation>
    <scope>FUNCTION</scope>
    <scope>DISRUPTION PHENOTYPE</scope>
</reference>
<protein>
    <recommendedName>
        <fullName>Calcium/calmodulin-dependent protein kinase II inhibitor 1</fullName>
    </recommendedName>
    <alternativeName>
        <fullName>calcium/calmodulin-dependent protein kinase II inhibitor alpha</fullName>
        <shortName>CaM-KIINalpha</shortName>
        <shortName>CaMKIINalpha</shortName>
    </alternativeName>
</protein>
<evidence type="ECO:0000250" key="1">
    <source>
        <dbReference type="UniProtKB" id="Q6QWF9"/>
    </source>
</evidence>
<evidence type="ECO:0000269" key="2">
    <source>
    </source>
</evidence>
<evidence type="ECO:0000269" key="3">
    <source>
    </source>
</evidence>
<evidence type="ECO:0000305" key="4"/>
<evidence type="ECO:0007829" key="5">
    <source>
        <dbReference type="PDB" id="3KL8"/>
    </source>
</evidence>
<feature type="chain" id="PRO_0000338395" description="Calcium/calmodulin-dependent protein kinase II inhibitor 1">
    <location>
        <begin position="1"/>
        <end position="78"/>
    </location>
</feature>
<feature type="region of interest" description="CAMK2 inhibitory domain">
    <location>
        <begin position="41"/>
        <end position="68"/>
    </location>
</feature>
<feature type="mutagenesis site" description="Reduces at least 100-fold the inhibitory potency; when associated with 59-K--A-61." evidence="2">
    <original>R</original>
    <variation>P</variation>
    <location>
        <position position="43"/>
    </location>
</feature>
<feature type="mutagenesis site" description="Slightly phosphorylated." evidence="2">
    <original>I</original>
    <variation>S</variation>
    <location>
        <position position="58"/>
    </location>
</feature>
<feature type="mutagenesis site" description="Reduces at least 100-fold the inhibitory potency; when associated with P-43." evidence="2">
    <original>EDD</original>
    <variation>KLA</variation>
    <location>
        <begin position="59"/>
        <end position="61"/>
    </location>
</feature>
<feature type="helix" evidence="5">
    <location>
        <begin position="47"/>
        <end position="50"/>
    </location>
</feature>
<proteinExistence type="evidence at protein level"/>
<sequence>MSEVLPYGDEKLSPYGDGGDVGQIFSCRLQDTNNFFGAGQSKRPPKLGQIGRSKRVVIEDDRIDDVLKTMTDKAPPGV</sequence>
<dbReference type="EMBL" id="AF271156">
    <property type="protein sequence ID" value="AAF75281.1"/>
    <property type="molecule type" value="mRNA"/>
</dbReference>
<dbReference type="RefSeq" id="NP_775459.1">
    <property type="nucleotide sequence ID" value="NM_173337.1"/>
</dbReference>
<dbReference type="PDB" id="3KL8">
    <property type="method" value="X-ray"/>
    <property type="resolution" value="3.37 A"/>
    <property type="chains" value="B/D/F/H/J=42-58"/>
</dbReference>
<dbReference type="PDBsum" id="3KL8"/>
<dbReference type="SMR" id="Q9JI15"/>
<dbReference type="BioGRID" id="251978">
    <property type="interactions" value="1"/>
</dbReference>
<dbReference type="DIP" id="DIP-58987N"/>
<dbReference type="FunCoup" id="Q9JI15">
    <property type="interactions" value="1352"/>
</dbReference>
<dbReference type="IntAct" id="Q9JI15">
    <property type="interactions" value="1"/>
</dbReference>
<dbReference type="STRING" id="10116.ENSRNOP00000021864"/>
<dbReference type="PhosphoSitePlus" id="Q9JI15"/>
<dbReference type="PaxDb" id="10116-ENSRNOP00000021864"/>
<dbReference type="GeneID" id="287005"/>
<dbReference type="KEGG" id="rno:287005"/>
<dbReference type="UCSC" id="RGD:708430">
    <property type="organism name" value="rat"/>
</dbReference>
<dbReference type="AGR" id="RGD:708430"/>
<dbReference type="CTD" id="55450"/>
<dbReference type="RGD" id="708430">
    <property type="gene designation" value="Camk2n1"/>
</dbReference>
<dbReference type="eggNOG" id="ENOG502S6QW">
    <property type="taxonomic scope" value="Eukaryota"/>
</dbReference>
<dbReference type="HOGENOM" id="CLU_197183_0_0_1"/>
<dbReference type="InParanoid" id="Q9JI15"/>
<dbReference type="OrthoDB" id="9922824at2759"/>
<dbReference type="PhylomeDB" id="Q9JI15"/>
<dbReference type="TreeFam" id="TF333175"/>
<dbReference type="PRO" id="PR:Q9JI15"/>
<dbReference type="Proteomes" id="UP000002494">
    <property type="component" value="Chromosome 5"/>
</dbReference>
<dbReference type="Bgee" id="ENSRNOG00000016322">
    <property type="expression patterns" value="Expressed in frontal cortex and 19 other cell types or tissues"/>
</dbReference>
<dbReference type="GO" id="GO:0030425">
    <property type="term" value="C:dendrite"/>
    <property type="evidence" value="ECO:0000314"/>
    <property type="project" value="HGNC-UCL"/>
</dbReference>
<dbReference type="GO" id="GO:0043025">
    <property type="term" value="C:neuronal cell body"/>
    <property type="evidence" value="ECO:0000314"/>
    <property type="project" value="HGNC-UCL"/>
</dbReference>
<dbReference type="GO" id="GO:0014069">
    <property type="term" value="C:postsynaptic density"/>
    <property type="evidence" value="ECO:0000266"/>
    <property type="project" value="RGD"/>
</dbReference>
<dbReference type="GO" id="GO:0045202">
    <property type="term" value="C:synapse"/>
    <property type="evidence" value="ECO:0000250"/>
    <property type="project" value="UniProtKB"/>
</dbReference>
<dbReference type="GO" id="GO:0008427">
    <property type="term" value="F:calcium-dependent protein kinase inhibitor activity"/>
    <property type="evidence" value="ECO:0000314"/>
    <property type="project" value="HGNC-UCL"/>
</dbReference>
<dbReference type="GO" id="GO:0019901">
    <property type="term" value="F:protein kinase binding"/>
    <property type="evidence" value="ECO:0000314"/>
    <property type="project" value="HGNC-UCL"/>
</dbReference>
<dbReference type="GO" id="GO:0004860">
    <property type="term" value="F:protein kinase inhibitor activity"/>
    <property type="evidence" value="ECO:0000266"/>
    <property type="project" value="RGD"/>
</dbReference>
<dbReference type="GO" id="GO:0007268">
    <property type="term" value="P:chemical synaptic transmission"/>
    <property type="evidence" value="ECO:0000305"/>
    <property type="project" value="HGNC-UCL"/>
</dbReference>
<dbReference type="GO" id="GO:0007616">
    <property type="term" value="P:long-term memory"/>
    <property type="evidence" value="ECO:0000250"/>
    <property type="project" value="UniProtKB"/>
</dbReference>
<dbReference type="GO" id="GO:0050729">
    <property type="term" value="P:positive regulation of inflammatory response"/>
    <property type="evidence" value="ECO:0000250"/>
    <property type="project" value="UniProtKB"/>
</dbReference>
<dbReference type="GO" id="GO:0035774">
    <property type="term" value="P:positive regulation of insulin secretion involved in cellular response to glucose stimulus"/>
    <property type="evidence" value="ECO:0000315"/>
    <property type="project" value="RGD"/>
</dbReference>
<dbReference type="GO" id="GO:0003084">
    <property type="term" value="P:positive regulation of systemic arterial blood pressure"/>
    <property type="evidence" value="ECO:0000315"/>
    <property type="project" value="RGD"/>
</dbReference>
<dbReference type="InterPro" id="IPR026779">
    <property type="entry name" value="Camk2n"/>
</dbReference>
<dbReference type="PANTHER" id="PTHR31007">
    <property type="entry name" value="CALCIUM/CALMODULIN-DEPENDENT PROTEIN KINASE II INHIBITOR 2"/>
    <property type="match status" value="1"/>
</dbReference>
<dbReference type="PANTHER" id="PTHR31007:SF3">
    <property type="entry name" value="CALCIUM_CALMODULIN-DEPENDENT PROTEIN KINASE II INHIBITOR 1"/>
    <property type="match status" value="1"/>
</dbReference>
<dbReference type="Pfam" id="PF15170">
    <property type="entry name" value="CaM-KIIN"/>
    <property type="match status" value="1"/>
</dbReference>
<gene>
    <name type="primary">Camk2n1</name>
</gene>
<comment type="function">
    <text evidence="1 2 3">Potent and specific inhibitor of CaM-kinase II (CAMK2) (PubMed:11182241). Plays a role in the maintenance of long-term retrieval-induced memory in response to contextual fear (By similarity). Modulates blood pressure and vascular reactivity via regulation of CAMK2 activity in addition to regulation of left ventricular mass (PubMed:31327268). Mediates the NLRP3 inflammasome in cardiomyocytes via acting as an inhibitor of the MAPK14/p38 and MAPK8/JNK pathways, thereby regulating ventricular remodeling and cardiac rhythm post-myocardial infarction (By similarity). Negatively effects insulin sensitivity and promotes lipid formation in adipose tissues independent of CAMK2 signaling (PubMed:31327268).</text>
</comment>
<comment type="subunit">
    <text evidence="2">Interacts with CAMK2B; the presence of Ca(2+)/calmodulin increases the interaction but is not essential (PubMed:11182241). Interacts with CAMK2A; this interaction requires CAMK2A activation by Ca(2+) (PubMed:11182241).</text>
</comment>
<comment type="subcellular location">
    <subcellularLocation>
        <location evidence="1">Synapse</location>
    </subcellularLocation>
    <subcellularLocation>
        <location evidence="2">Cell projection</location>
        <location evidence="2">Dendrite</location>
    </subcellularLocation>
    <subcellularLocation>
        <location evidence="1">Postsynaptic density</location>
    </subcellularLocation>
</comment>
<comment type="tissue specificity">
    <text evidence="2">Brain specific (PubMed:11182241). Highly expressed in frontal cortex, hippocampus, olfactory bulb, caudate-putamen and cerebellum (at protein level) (PubMed:11182241).</text>
</comment>
<comment type="disruption phenotype">
    <text evidence="3">Knockout in a spontaneously hypertensive rat model results in decreased blood pressure and vascular reactivity to N-omega-Nitro-L-arginine methyl ester hydrochloride (PubMed:31327268). Increased renal and serum endothelial nitric oxide synthase and serum nitrate levels (PubMed:31327268). Reduced fasting plasma glucose concentrations and a 23% decrease in visceral and brown adipose tissue relative mass, resulting from a decrease in adipocyte number (PubMed:31327268).</text>
</comment>
<comment type="similarity">
    <text evidence="4">Belongs to the CAMK2N family.</text>
</comment>
<organism>
    <name type="scientific">Rattus norvegicus</name>
    <name type="common">Rat</name>
    <dbReference type="NCBI Taxonomy" id="10116"/>
    <lineage>
        <taxon>Eukaryota</taxon>
        <taxon>Metazoa</taxon>
        <taxon>Chordata</taxon>
        <taxon>Craniata</taxon>
        <taxon>Vertebrata</taxon>
        <taxon>Euteleostomi</taxon>
        <taxon>Mammalia</taxon>
        <taxon>Eutheria</taxon>
        <taxon>Euarchontoglires</taxon>
        <taxon>Glires</taxon>
        <taxon>Rodentia</taxon>
        <taxon>Myomorpha</taxon>
        <taxon>Muroidea</taxon>
        <taxon>Muridae</taxon>
        <taxon>Murinae</taxon>
        <taxon>Rattus</taxon>
    </lineage>
</organism>
<keyword id="KW-0002">3D-structure</keyword>
<keyword id="KW-0966">Cell projection</keyword>
<keyword id="KW-0649">Protein kinase inhibitor</keyword>
<keyword id="KW-1185">Reference proteome</keyword>
<keyword id="KW-0770">Synapse</keyword>